<evidence type="ECO:0000255" key="1">
    <source>
        <dbReference type="HAMAP-Rule" id="MF_00332"/>
    </source>
</evidence>
<evidence type="ECO:0000256" key="2">
    <source>
        <dbReference type="SAM" id="MobiDB-lite"/>
    </source>
</evidence>
<organism>
    <name type="scientific">Stutzerimonas stutzeri (strain A1501)</name>
    <name type="common">Pseudomonas stutzeri</name>
    <dbReference type="NCBI Taxonomy" id="379731"/>
    <lineage>
        <taxon>Bacteria</taxon>
        <taxon>Pseudomonadati</taxon>
        <taxon>Pseudomonadota</taxon>
        <taxon>Gammaproteobacteria</taxon>
        <taxon>Pseudomonadales</taxon>
        <taxon>Pseudomonadaceae</taxon>
        <taxon>Stutzerimonas</taxon>
    </lineage>
</organism>
<accession>A4VPQ5</accession>
<feature type="chain" id="PRO_1000059636" description="Chaperone protein DnaK">
    <location>
        <begin position="1"/>
        <end position="637"/>
    </location>
</feature>
<feature type="region of interest" description="Disordered" evidence="2">
    <location>
        <begin position="605"/>
        <end position="625"/>
    </location>
</feature>
<feature type="compositionally biased region" description="Low complexity" evidence="2">
    <location>
        <begin position="605"/>
        <end position="619"/>
    </location>
</feature>
<feature type="modified residue" description="Phosphothreonine; by autocatalysis" evidence="1">
    <location>
        <position position="199"/>
    </location>
</feature>
<protein>
    <recommendedName>
        <fullName evidence="1">Chaperone protein DnaK</fullName>
    </recommendedName>
    <alternativeName>
        <fullName evidence="1">HSP70</fullName>
    </alternativeName>
    <alternativeName>
        <fullName evidence="1">Heat shock 70 kDa protein</fullName>
    </alternativeName>
    <alternativeName>
        <fullName evidence="1">Heat shock protein 70</fullName>
    </alternativeName>
</protein>
<sequence>MGKIIGIDLGTTNSCVSIMENGNVKVIENAEGGRTTPSIIAYTNDGETLVGQSAKRQAVTNPQNTLYAVKRLIGRRFEEDVVQKDIKMVPYTIVKADNGDAWVEVKGQKMAPPQISAEVLKKMKKTAEDYLGEPVTEAVITVPAYFNDSQRQATKDAGRIAGLDVKRIINEPTAAALAYGMDKAKGDHTVIVYDLGGGTFDVSVIEIAEVDGEHQFEVLATNGDTFLGGEDFDIRLIDYLVDEFKKETGMNLKGDPLAMQRLKEAAEKAKIELSSSQQTDVNLPYITADASGPKHLNVKISRAKLESLVEDLVERTIEPCRIALKDAGIDVSKINDVILVGGQTRMPLVQQKVAEFFGKEARKDVNPDEAVAMGAAIQGAVLAGDVKDVLLLDVSPLTLGIETLGGVMTPLIEKNTTIPTKKSQVFSTADDNQSAVTIHVLQGERKQAAQNKSLGRFDLAEIPPAPRGMPQIEVTFDIDANGILHVSAKDKATGKQQSIVIKANSGLSEEEIEQMVRDAEANAEEDRKFEELATARNQGDQLVHATRKMLTEAGDKASDDDKAAIEKALSELELAIKGDDKAAIEAKIAAVSQASTPVAQKMYAEQAQAGEGQPAGEQAKPGDDVVDAEFEEVKDNK</sequence>
<comment type="function">
    <text evidence="1">Acts as a chaperone.</text>
</comment>
<comment type="induction">
    <text evidence="1">By stress conditions e.g. heat shock.</text>
</comment>
<comment type="similarity">
    <text evidence="1">Belongs to the heat shock protein 70 family.</text>
</comment>
<name>DNAK_STUS1</name>
<gene>
    <name evidence="1" type="primary">dnaK</name>
    <name type="ordered locus">PST_3327</name>
</gene>
<keyword id="KW-0067">ATP-binding</keyword>
<keyword id="KW-0143">Chaperone</keyword>
<keyword id="KW-0547">Nucleotide-binding</keyword>
<keyword id="KW-0597">Phosphoprotein</keyword>
<keyword id="KW-1185">Reference proteome</keyword>
<keyword id="KW-0346">Stress response</keyword>
<reference key="1">
    <citation type="journal article" date="2008" name="Proc. Natl. Acad. Sci. U.S.A.">
        <title>Nitrogen fixation island and rhizosphere competence traits in the genome of root-associated Pseudomonas stutzeri A1501.</title>
        <authorList>
            <person name="Yan Y."/>
            <person name="Yang J."/>
            <person name="Dou Y."/>
            <person name="Chen M."/>
            <person name="Ping S."/>
            <person name="Peng J."/>
            <person name="Lu W."/>
            <person name="Zhang W."/>
            <person name="Yao Z."/>
            <person name="Li H."/>
            <person name="Liu W."/>
            <person name="He S."/>
            <person name="Geng L."/>
            <person name="Zhang X."/>
            <person name="Yang F."/>
            <person name="Yu H."/>
            <person name="Zhan Y."/>
            <person name="Li D."/>
            <person name="Lin Z."/>
            <person name="Wang Y."/>
            <person name="Elmerich C."/>
            <person name="Lin M."/>
            <person name="Jin Q."/>
        </authorList>
    </citation>
    <scope>NUCLEOTIDE SEQUENCE [LARGE SCALE GENOMIC DNA]</scope>
    <source>
        <strain>A1501</strain>
    </source>
</reference>
<proteinExistence type="inferred from homology"/>
<dbReference type="EMBL" id="CP000304">
    <property type="protein sequence ID" value="ABP80956.1"/>
    <property type="molecule type" value="Genomic_DNA"/>
</dbReference>
<dbReference type="RefSeq" id="WP_011914387.1">
    <property type="nucleotide sequence ID" value="NC_009434.1"/>
</dbReference>
<dbReference type="SMR" id="A4VPQ5"/>
<dbReference type="KEGG" id="psa:PST_3327"/>
<dbReference type="eggNOG" id="COG0443">
    <property type="taxonomic scope" value="Bacteria"/>
</dbReference>
<dbReference type="HOGENOM" id="CLU_005965_2_1_6"/>
<dbReference type="Proteomes" id="UP000000233">
    <property type="component" value="Chromosome"/>
</dbReference>
<dbReference type="GO" id="GO:0005524">
    <property type="term" value="F:ATP binding"/>
    <property type="evidence" value="ECO:0007669"/>
    <property type="project" value="UniProtKB-UniRule"/>
</dbReference>
<dbReference type="GO" id="GO:0140662">
    <property type="term" value="F:ATP-dependent protein folding chaperone"/>
    <property type="evidence" value="ECO:0007669"/>
    <property type="project" value="InterPro"/>
</dbReference>
<dbReference type="GO" id="GO:0051082">
    <property type="term" value="F:unfolded protein binding"/>
    <property type="evidence" value="ECO:0007669"/>
    <property type="project" value="InterPro"/>
</dbReference>
<dbReference type="CDD" id="cd10234">
    <property type="entry name" value="ASKHA_NBD_HSP70_DnaK-like"/>
    <property type="match status" value="1"/>
</dbReference>
<dbReference type="FunFam" id="2.60.34.10:FF:000014">
    <property type="entry name" value="Chaperone protein DnaK HSP70"/>
    <property type="match status" value="1"/>
</dbReference>
<dbReference type="FunFam" id="3.30.30.30:FF:000003">
    <property type="entry name" value="Heat shock protein 9"/>
    <property type="match status" value="1"/>
</dbReference>
<dbReference type="FunFam" id="1.20.1270.10:FF:000001">
    <property type="entry name" value="Molecular chaperone DnaK"/>
    <property type="match status" value="1"/>
</dbReference>
<dbReference type="FunFam" id="3.30.420.40:FF:000004">
    <property type="entry name" value="Molecular chaperone DnaK"/>
    <property type="match status" value="1"/>
</dbReference>
<dbReference type="FunFam" id="3.90.640.10:FF:000003">
    <property type="entry name" value="Molecular chaperone DnaK"/>
    <property type="match status" value="1"/>
</dbReference>
<dbReference type="Gene3D" id="1.20.1270.10">
    <property type="match status" value="1"/>
</dbReference>
<dbReference type="Gene3D" id="3.30.420.40">
    <property type="match status" value="2"/>
</dbReference>
<dbReference type="Gene3D" id="3.90.640.10">
    <property type="entry name" value="Actin, Chain A, domain 4"/>
    <property type="match status" value="1"/>
</dbReference>
<dbReference type="Gene3D" id="2.60.34.10">
    <property type="entry name" value="Substrate Binding Domain Of DNAk, Chain A, domain 1"/>
    <property type="match status" value="1"/>
</dbReference>
<dbReference type="HAMAP" id="MF_00332">
    <property type="entry name" value="DnaK"/>
    <property type="match status" value="1"/>
</dbReference>
<dbReference type="InterPro" id="IPR043129">
    <property type="entry name" value="ATPase_NBD"/>
</dbReference>
<dbReference type="InterPro" id="IPR012725">
    <property type="entry name" value="Chaperone_DnaK"/>
</dbReference>
<dbReference type="InterPro" id="IPR018181">
    <property type="entry name" value="Heat_shock_70_CS"/>
</dbReference>
<dbReference type="InterPro" id="IPR029048">
    <property type="entry name" value="HSP70_C_sf"/>
</dbReference>
<dbReference type="InterPro" id="IPR029047">
    <property type="entry name" value="HSP70_peptide-bd_sf"/>
</dbReference>
<dbReference type="InterPro" id="IPR013126">
    <property type="entry name" value="Hsp_70_fam"/>
</dbReference>
<dbReference type="NCBIfam" id="NF001413">
    <property type="entry name" value="PRK00290.1"/>
    <property type="match status" value="1"/>
</dbReference>
<dbReference type="NCBIfam" id="NF003520">
    <property type="entry name" value="PRK05183.1"/>
    <property type="match status" value="1"/>
</dbReference>
<dbReference type="NCBIfam" id="TIGR02350">
    <property type="entry name" value="prok_dnaK"/>
    <property type="match status" value="1"/>
</dbReference>
<dbReference type="PANTHER" id="PTHR19375">
    <property type="entry name" value="HEAT SHOCK PROTEIN 70KDA"/>
    <property type="match status" value="1"/>
</dbReference>
<dbReference type="Pfam" id="PF00012">
    <property type="entry name" value="HSP70"/>
    <property type="match status" value="1"/>
</dbReference>
<dbReference type="PRINTS" id="PR00301">
    <property type="entry name" value="HEATSHOCK70"/>
</dbReference>
<dbReference type="SUPFAM" id="SSF53067">
    <property type="entry name" value="Actin-like ATPase domain"/>
    <property type="match status" value="2"/>
</dbReference>
<dbReference type="SUPFAM" id="SSF100934">
    <property type="entry name" value="Heat shock protein 70kD (HSP70), C-terminal subdomain"/>
    <property type="match status" value="1"/>
</dbReference>
<dbReference type="SUPFAM" id="SSF100920">
    <property type="entry name" value="Heat shock protein 70kD (HSP70), peptide-binding domain"/>
    <property type="match status" value="1"/>
</dbReference>
<dbReference type="PROSITE" id="PS00297">
    <property type="entry name" value="HSP70_1"/>
    <property type="match status" value="1"/>
</dbReference>
<dbReference type="PROSITE" id="PS00329">
    <property type="entry name" value="HSP70_2"/>
    <property type="match status" value="1"/>
</dbReference>
<dbReference type="PROSITE" id="PS01036">
    <property type="entry name" value="HSP70_3"/>
    <property type="match status" value="1"/>
</dbReference>